<keyword id="KW-0054">Arabinose catabolism</keyword>
<keyword id="KW-0067">ATP-binding</keyword>
<keyword id="KW-0119">Carbohydrate metabolism</keyword>
<keyword id="KW-0418">Kinase</keyword>
<keyword id="KW-0547">Nucleotide-binding</keyword>
<keyword id="KW-1185">Reference proteome</keyword>
<keyword id="KW-0808">Transferase</keyword>
<proteinExistence type="inferred from homology"/>
<organism>
    <name type="scientific">Shigella boydii serotype 18 (strain CDC 3083-94 / BS512)</name>
    <dbReference type="NCBI Taxonomy" id="344609"/>
    <lineage>
        <taxon>Bacteria</taxon>
        <taxon>Pseudomonadati</taxon>
        <taxon>Pseudomonadota</taxon>
        <taxon>Gammaproteobacteria</taxon>
        <taxon>Enterobacterales</taxon>
        <taxon>Enterobacteriaceae</taxon>
        <taxon>Shigella</taxon>
    </lineage>
</organism>
<gene>
    <name evidence="1" type="primary">araB</name>
    <name type="ordered locus">SbBS512_E0055</name>
</gene>
<reference key="1">
    <citation type="submission" date="2008-05" db="EMBL/GenBank/DDBJ databases">
        <title>Complete sequence of Shigella boydii serotype 18 strain BS512.</title>
        <authorList>
            <person name="Rasko D.A."/>
            <person name="Rosovitz M."/>
            <person name="Maurelli A.T."/>
            <person name="Myers G."/>
            <person name="Seshadri R."/>
            <person name="Cer R."/>
            <person name="Jiang L."/>
            <person name="Ravel J."/>
            <person name="Sebastian Y."/>
        </authorList>
    </citation>
    <scope>NUCLEOTIDE SEQUENCE [LARGE SCALE GENOMIC DNA]</scope>
    <source>
        <strain>CDC 3083-94 / BS512</strain>
    </source>
</reference>
<evidence type="ECO:0000255" key="1">
    <source>
        <dbReference type="HAMAP-Rule" id="MF_00520"/>
    </source>
</evidence>
<sequence>MAIAIGLDFGSDSVRALAVDCASGEEIATSVEWYPRWQKGQFCDAPNNQFRHHPRDYIESMEAALKTVLAELSVEQRAAVVGIGVDSTGSTPAPIDADGNVLALRPEFAEKPNAMFVLWKDHTAVEEAEEITRLCHAPGNVDYSRYIGGIYSSEWFWAKILHVTRQDSAVAQSAASWIELCDWVPALLSGTTRPQDIRRGRCSAGHKSLWHESWGGLPPASFFDELDPILNRHLPSPLFTDTWTADIPVGTLCPEWAQRLGLPESVVISGGAFDCHMGAVGAGAQPNALVKVIGTSTCDILIADKQSVGERAVKGICGQVDGSVVPGFIGLEAGQSAFGDIYAWFGRVLGWPLEQLAAQHPELKAQINASQKQLLPALTEAWAKNPSLDHLPVVLDWFNGRRTPNANQRLKGVITDLNLATDAPLLFGGLIAATAFGARAIMECFTDQGIAVNNVMALGGIARKNQVIMQACCDVLNRPLQIVASDQCCALGAAIFAAVAAKVHADIPSAQQKMASAVEKTLQPRSEQAQRFEQLYRRYQQWAMSAEQHYLPTSAPAQAAQAVPTL</sequence>
<name>ARAB_SHIB3</name>
<protein>
    <recommendedName>
        <fullName evidence="1">Ribulokinase</fullName>
        <ecNumber evidence="1">2.7.1.16</ecNumber>
    </recommendedName>
</protein>
<dbReference type="EC" id="2.7.1.16" evidence="1"/>
<dbReference type="EMBL" id="CP001063">
    <property type="protein sequence ID" value="ACD09887.1"/>
    <property type="molecule type" value="Genomic_DNA"/>
</dbReference>
<dbReference type="RefSeq" id="WP_000951764.1">
    <property type="nucleotide sequence ID" value="NC_010658.1"/>
</dbReference>
<dbReference type="SMR" id="B2U269"/>
<dbReference type="STRING" id="344609.SbBS512_E0055"/>
<dbReference type="KEGG" id="sbc:SbBS512_E0055"/>
<dbReference type="HOGENOM" id="CLU_009281_9_1_6"/>
<dbReference type="UniPathway" id="UPA00145">
    <property type="reaction ID" value="UER00566"/>
</dbReference>
<dbReference type="Proteomes" id="UP000001030">
    <property type="component" value="Chromosome"/>
</dbReference>
<dbReference type="GO" id="GO:0005737">
    <property type="term" value="C:cytoplasm"/>
    <property type="evidence" value="ECO:0007669"/>
    <property type="project" value="TreeGrafter"/>
</dbReference>
<dbReference type="GO" id="GO:0005524">
    <property type="term" value="F:ATP binding"/>
    <property type="evidence" value="ECO:0007669"/>
    <property type="project" value="UniProtKB-KW"/>
</dbReference>
<dbReference type="GO" id="GO:0019150">
    <property type="term" value="F:D-ribulokinase activity"/>
    <property type="evidence" value="ECO:0007669"/>
    <property type="project" value="TreeGrafter"/>
</dbReference>
<dbReference type="GO" id="GO:0008741">
    <property type="term" value="F:ribulokinase activity"/>
    <property type="evidence" value="ECO:0007669"/>
    <property type="project" value="UniProtKB-UniRule"/>
</dbReference>
<dbReference type="GO" id="GO:0019569">
    <property type="term" value="P:L-arabinose catabolic process to xylulose 5-phosphate"/>
    <property type="evidence" value="ECO:0007669"/>
    <property type="project" value="UniProtKB-UniRule"/>
</dbReference>
<dbReference type="CDD" id="cd07781">
    <property type="entry name" value="ASKHA_NBD_FGGY_L-RBK"/>
    <property type="match status" value="1"/>
</dbReference>
<dbReference type="Gene3D" id="1.20.58.2240">
    <property type="match status" value="1"/>
</dbReference>
<dbReference type="Gene3D" id="3.30.420.40">
    <property type="match status" value="1"/>
</dbReference>
<dbReference type="HAMAP" id="MF_00520">
    <property type="entry name" value="Ribulokinase"/>
    <property type="match status" value="1"/>
</dbReference>
<dbReference type="InterPro" id="IPR043129">
    <property type="entry name" value="ATPase_NBD"/>
</dbReference>
<dbReference type="InterPro" id="IPR018485">
    <property type="entry name" value="FGGY_C"/>
</dbReference>
<dbReference type="InterPro" id="IPR005929">
    <property type="entry name" value="Ribulokinase"/>
</dbReference>
<dbReference type="NCBIfam" id="TIGR01234">
    <property type="entry name" value="L-ribulokinase"/>
    <property type="match status" value="1"/>
</dbReference>
<dbReference type="NCBIfam" id="NF003154">
    <property type="entry name" value="PRK04123.1"/>
    <property type="match status" value="1"/>
</dbReference>
<dbReference type="PANTHER" id="PTHR43435:SF4">
    <property type="entry name" value="FGGY CARBOHYDRATE KINASE DOMAIN-CONTAINING PROTEIN"/>
    <property type="match status" value="1"/>
</dbReference>
<dbReference type="PANTHER" id="PTHR43435">
    <property type="entry name" value="RIBULOKINASE"/>
    <property type="match status" value="1"/>
</dbReference>
<dbReference type="Pfam" id="PF02782">
    <property type="entry name" value="FGGY_C"/>
    <property type="match status" value="1"/>
</dbReference>
<dbReference type="SUPFAM" id="SSF53067">
    <property type="entry name" value="Actin-like ATPase domain"/>
    <property type="match status" value="2"/>
</dbReference>
<accession>B2U269</accession>
<comment type="catalytic activity">
    <reaction evidence="1">
        <text>D-ribulose + ATP = D-ribulose 5-phosphate + ADP + H(+)</text>
        <dbReference type="Rhea" id="RHEA:17601"/>
        <dbReference type="ChEBI" id="CHEBI:15378"/>
        <dbReference type="ChEBI" id="CHEBI:17173"/>
        <dbReference type="ChEBI" id="CHEBI:30616"/>
        <dbReference type="ChEBI" id="CHEBI:58121"/>
        <dbReference type="ChEBI" id="CHEBI:456216"/>
        <dbReference type="EC" id="2.7.1.16"/>
    </reaction>
</comment>
<comment type="catalytic activity">
    <reaction evidence="1">
        <text>L-ribulose + ATP = L-ribulose 5-phosphate + ADP + H(+)</text>
        <dbReference type="Rhea" id="RHEA:22072"/>
        <dbReference type="ChEBI" id="CHEBI:15378"/>
        <dbReference type="ChEBI" id="CHEBI:16880"/>
        <dbReference type="ChEBI" id="CHEBI:30616"/>
        <dbReference type="ChEBI" id="CHEBI:58226"/>
        <dbReference type="ChEBI" id="CHEBI:456216"/>
        <dbReference type="EC" id="2.7.1.16"/>
    </reaction>
</comment>
<comment type="pathway">
    <text evidence="1">Carbohydrate degradation; L-arabinose degradation via L-ribulose; D-xylulose 5-phosphate from L-arabinose (bacterial route): step 2/3.</text>
</comment>
<comment type="similarity">
    <text evidence="1">Belongs to the ribulokinase family.</text>
</comment>
<feature type="chain" id="PRO_1000127644" description="Ribulokinase">
    <location>
        <begin position="1"/>
        <end position="566"/>
    </location>
</feature>